<protein>
    <recommendedName>
        <fullName>56 kDa cell wall protein</fullName>
    </recommendedName>
</protein>
<feature type="chain" id="PRO_0000079642" description="56 kDa cell wall protein">
    <location>
        <begin position="1"/>
        <end position="18" status="greater than"/>
    </location>
</feature>
<feature type="non-terminal residue" evidence="2">
    <location>
        <position position="18"/>
    </location>
</feature>
<reference evidence="3" key="1">
    <citation type="journal article" date="1997" name="J. Biol. Chem.">
        <title>Differential extraction and protein sequencing reveals major differences in patterns of primary cell wall proteins from plants.</title>
        <authorList>
            <person name="Robertson D."/>
            <person name="Mitchell G.P."/>
            <person name="Gilroy J.S."/>
            <person name="Gerrish C."/>
            <person name="Bolwell G.P."/>
            <person name="Slabas A.R."/>
        </authorList>
    </citation>
    <scope>PROTEIN SEQUENCE</scope>
    <scope>SUBCELLULAR LOCATION</scope>
</reference>
<accession>P80783</accession>
<comment type="subcellular location">
    <subcellularLocation>
        <location evidence="1">Secreted</location>
        <location evidence="1">Cell wall</location>
    </subcellularLocation>
</comment>
<sequence length="18" mass="1849">GEQPGDQARGARNPXGNN</sequence>
<organism>
    <name type="scientific">Nicotiana tabacum</name>
    <name type="common">Common tobacco</name>
    <dbReference type="NCBI Taxonomy" id="4097"/>
    <lineage>
        <taxon>Eukaryota</taxon>
        <taxon>Viridiplantae</taxon>
        <taxon>Streptophyta</taxon>
        <taxon>Embryophyta</taxon>
        <taxon>Tracheophyta</taxon>
        <taxon>Spermatophyta</taxon>
        <taxon>Magnoliopsida</taxon>
        <taxon>eudicotyledons</taxon>
        <taxon>Gunneridae</taxon>
        <taxon>Pentapetalae</taxon>
        <taxon>asterids</taxon>
        <taxon>lamiids</taxon>
        <taxon>Solanales</taxon>
        <taxon>Solanaceae</taxon>
        <taxon>Nicotianoideae</taxon>
        <taxon>Nicotianeae</taxon>
        <taxon>Nicotiana</taxon>
    </lineage>
</organism>
<dbReference type="PaxDb" id="4097-P80783"/>
<dbReference type="Proteomes" id="UP000084051">
    <property type="component" value="Unplaced"/>
</dbReference>
<dbReference type="GO" id="GO:0005576">
    <property type="term" value="C:extracellular region"/>
    <property type="evidence" value="ECO:0007669"/>
    <property type="project" value="UniProtKB-KW"/>
</dbReference>
<proteinExistence type="evidence at protein level"/>
<evidence type="ECO:0000269" key="1">
    <source>
    </source>
</evidence>
<evidence type="ECO:0000303" key="2">
    <source>
    </source>
</evidence>
<evidence type="ECO:0000305" key="3"/>
<name>CWP06_TOBAC</name>
<keyword id="KW-0134">Cell wall</keyword>
<keyword id="KW-0903">Direct protein sequencing</keyword>
<keyword id="KW-1185">Reference proteome</keyword>
<keyword id="KW-0964">Secreted</keyword>